<name>SYV_CORGL</name>
<feature type="chain" id="PRO_0000224467" description="Valine--tRNA ligase">
    <location>
        <begin position="1"/>
        <end position="903"/>
    </location>
</feature>
<feature type="region of interest" description="Disordered" evidence="2">
    <location>
        <begin position="1"/>
        <end position="21"/>
    </location>
</feature>
<feature type="coiled-coil region" evidence="1">
    <location>
        <begin position="836"/>
        <end position="903"/>
    </location>
</feature>
<feature type="short sequence motif" description="'HIGH' region">
    <location>
        <begin position="61"/>
        <end position="71"/>
    </location>
</feature>
<feature type="short sequence motif" description="'KMSKS' region">
    <location>
        <begin position="552"/>
        <end position="556"/>
    </location>
</feature>
<feature type="compositionally biased region" description="Polar residues" evidence="2">
    <location>
        <begin position="1"/>
        <end position="15"/>
    </location>
</feature>
<feature type="binding site" evidence="1">
    <location>
        <position position="555"/>
    </location>
    <ligand>
        <name>ATP</name>
        <dbReference type="ChEBI" id="CHEBI:30616"/>
    </ligand>
</feature>
<sequence length="903" mass="101585">MVCVTDQNNETTSQNRADKLPKSWDPKAVEADLYQGWVDAGYFTADPASDKPGFSIVLPPPNVTGQLHMGHALDHTLMDALARRKRMQGFEVLWLPGMDHAGIATQTKVEEMLKETEGKTRYDYDREEFIAKVWEWKQEYGGKIGEQMRAIGDSVDWSRERFTLDDGLSRAVQTIFKKLFDAGLIYQANRLVNWSPVLETAVSDIEVIYKDVEGELVSIRYGSLNDDEPHVIVATTRVETMLGDVAVAVHPDDERYKDLVGQTLPHPFRDDLSLKVVADDYVDPEFGSGAVKITPAHDPNDYALGLRHNLDMPTIMDKTGRIADTGTQFDGLTREEARIKVREELAAQGRIVKEIRPYVHSVGHSERSGEAIEPRLSLQWFVKVEELAKMSGDAVREGDTTIHPKSLEPRYFDWVDNMHDWTISRQLWWGHRIPIWYGPNDEIICVGPDEQAPEGYVQDPDVLDTWFSSALWPFSTMGWPEKTPELEKFYPTSVLVTAYDILFFWVARMMMFGTFAAKETPELLGEGKDGRPQVPFTDLFLHGLVRDEHGRKMSKSLGNGIDPMDWVENYGADALRFTLARGANPGVDLPVGEDSAQSSRNFATKLFNATKFALMNGAVSEGLPAREELTDADRWIVDLLEQVRLDVDAYLDNYQFAKANEELYHFAWNEFCDWYLEIAKVQIPREGTSAQGENTQKVLGHVLDALLRLLHPAMPFVTEVLWQALTDRTSIVVASWPTAADTNGGVAVDADAARRIGDVEKLVTEVRRFRADQGVKPSQKVPARLDFVACDLQDLEDSVRSLVRIEQPEDDFAASASLEIRLSQATITVELDTSGTVDVAAERKRLEKDLANAQKELETTAKKLGNEAFLSKAPDAVVDKIRGRAQIAQEEVERINKRLEELA</sequence>
<accession>Q8NN37</accession>
<accession>Q6M381</accession>
<keyword id="KW-0030">Aminoacyl-tRNA synthetase</keyword>
<keyword id="KW-0067">ATP-binding</keyword>
<keyword id="KW-0175">Coiled coil</keyword>
<keyword id="KW-0963">Cytoplasm</keyword>
<keyword id="KW-0436">Ligase</keyword>
<keyword id="KW-0547">Nucleotide-binding</keyword>
<keyword id="KW-0648">Protein biosynthesis</keyword>
<keyword id="KW-1185">Reference proteome</keyword>
<comment type="function">
    <text evidence="1">Catalyzes the attachment of valine to tRNA(Val). As ValRS can inadvertently accommodate and process structurally similar amino acids such as threonine, to avoid such errors, it has a 'posttransfer' editing activity that hydrolyzes mischarged Thr-tRNA(Val) in a tRNA-dependent manner.</text>
</comment>
<comment type="catalytic activity">
    <reaction evidence="1">
        <text>tRNA(Val) + L-valine + ATP = L-valyl-tRNA(Val) + AMP + diphosphate</text>
        <dbReference type="Rhea" id="RHEA:10704"/>
        <dbReference type="Rhea" id="RHEA-COMP:9672"/>
        <dbReference type="Rhea" id="RHEA-COMP:9708"/>
        <dbReference type="ChEBI" id="CHEBI:30616"/>
        <dbReference type="ChEBI" id="CHEBI:33019"/>
        <dbReference type="ChEBI" id="CHEBI:57762"/>
        <dbReference type="ChEBI" id="CHEBI:78442"/>
        <dbReference type="ChEBI" id="CHEBI:78537"/>
        <dbReference type="ChEBI" id="CHEBI:456215"/>
        <dbReference type="EC" id="6.1.1.9"/>
    </reaction>
</comment>
<comment type="subunit">
    <text evidence="1">Monomer.</text>
</comment>
<comment type="subcellular location">
    <subcellularLocation>
        <location evidence="1">Cytoplasm</location>
    </subcellularLocation>
</comment>
<comment type="domain">
    <text evidence="1">ValRS has two distinct active sites: one for aminoacylation and one for editing. The misactivated threonine is translocated from the active site to the editing site.</text>
</comment>
<comment type="domain">
    <text evidence="1">The C-terminal coiled-coil domain is crucial for aminoacylation activity.</text>
</comment>
<comment type="similarity">
    <text evidence="1">Belongs to the class-I aminoacyl-tRNA synthetase family. ValS type 1 subfamily.</text>
</comment>
<comment type="sequence caution" evidence="3">
    <conflict type="erroneous initiation">
        <sequence resource="EMBL-CDS" id="BAB99769"/>
    </conflict>
</comment>
<organism>
    <name type="scientific">Corynebacterium glutamicum (strain ATCC 13032 / DSM 20300 / JCM 1318 / BCRC 11384 / CCUG 27702 / LMG 3730 / NBRC 12168 / NCIMB 10025 / NRRL B-2784 / 534)</name>
    <dbReference type="NCBI Taxonomy" id="196627"/>
    <lineage>
        <taxon>Bacteria</taxon>
        <taxon>Bacillati</taxon>
        <taxon>Actinomycetota</taxon>
        <taxon>Actinomycetes</taxon>
        <taxon>Mycobacteriales</taxon>
        <taxon>Corynebacteriaceae</taxon>
        <taxon>Corynebacterium</taxon>
    </lineage>
</organism>
<evidence type="ECO:0000255" key="1">
    <source>
        <dbReference type="HAMAP-Rule" id="MF_02004"/>
    </source>
</evidence>
<evidence type="ECO:0000256" key="2">
    <source>
        <dbReference type="SAM" id="MobiDB-lite"/>
    </source>
</evidence>
<evidence type="ECO:0000305" key="3"/>
<protein>
    <recommendedName>
        <fullName evidence="1">Valine--tRNA ligase</fullName>
        <ecNumber evidence="1">6.1.1.9</ecNumber>
    </recommendedName>
    <alternativeName>
        <fullName evidence="1">Valyl-tRNA synthetase</fullName>
        <shortName evidence="1">ValRS</shortName>
    </alternativeName>
</protein>
<reference key="1">
    <citation type="journal article" date="2003" name="Appl. Microbiol. Biotechnol.">
        <title>The Corynebacterium glutamicum genome: features and impacts on biotechnological processes.</title>
        <authorList>
            <person name="Ikeda M."/>
            <person name="Nakagawa S."/>
        </authorList>
    </citation>
    <scope>NUCLEOTIDE SEQUENCE [LARGE SCALE GENOMIC DNA]</scope>
    <source>
        <strain>ATCC 13032 / DSM 20300 / JCM 1318 / BCRC 11384 / CCUG 27702 / LMG 3730 / NBRC 12168 / NCIMB 10025 / NRRL B-2784 / 534</strain>
    </source>
</reference>
<reference key="2">
    <citation type="journal article" date="2003" name="J. Biotechnol.">
        <title>The complete Corynebacterium glutamicum ATCC 13032 genome sequence and its impact on the production of L-aspartate-derived amino acids and vitamins.</title>
        <authorList>
            <person name="Kalinowski J."/>
            <person name="Bathe B."/>
            <person name="Bartels D."/>
            <person name="Bischoff N."/>
            <person name="Bott M."/>
            <person name="Burkovski A."/>
            <person name="Dusch N."/>
            <person name="Eggeling L."/>
            <person name="Eikmanns B.J."/>
            <person name="Gaigalat L."/>
            <person name="Goesmann A."/>
            <person name="Hartmann M."/>
            <person name="Huthmacher K."/>
            <person name="Kraemer R."/>
            <person name="Linke B."/>
            <person name="McHardy A.C."/>
            <person name="Meyer F."/>
            <person name="Moeckel B."/>
            <person name="Pfefferle W."/>
            <person name="Puehler A."/>
            <person name="Rey D.A."/>
            <person name="Rueckert C."/>
            <person name="Rupp O."/>
            <person name="Sahm H."/>
            <person name="Wendisch V.F."/>
            <person name="Wiegraebe I."/>
            <person name="Tauch A."/>
        </authorList>
    </citation>
    <scope>NUCLEOTIDE SEQUENCE [LARGE SCALE GENOMIC DNA]</scope>
    <source>
        <strain>ATCC 13032 / DSM 20300 / JCM 1318 / BCRC 11384 / CCUG 27702 / LMG 3730 / NBRC 12168 / NCIMB 10025 / NRRL B-2784 / 534</strain>
    </source>
</reference>
<dbReference type="EC" id="6.1.1.9" evidence="1"/>
<dbReference type="EMBL" id="BA000036">
    <property type="protein sequence ID" value="BAB99769.1"/>
    <property type="status" value="ALT_INIT"/>
    <property type="molecule type" value="Genomic_DNA"/>
</dbReference>
<dbReference type="EMBL" id="BX927155">
    <property type="protein sequence ID" value="CAF21041.1"/>
    <property type="molecule type" value="Genomic_DNA"/>
</dbReference>
<dbReference type="RefSeq" id="NP_601577.1">
    <property type="nucleotide sequence ID" value="NC_003450.3"/>
</dbReference>
<dbReference type="RefSeq" id="WP_011015075.1">
    <property type="nucleotide sequence ID" value="NC_006958.1"/>
</dbReference>
<dbReference type="SMR" id="Q8NN37"/>
<dbReference type="STRING" id="196627.cg2609"/>
<dbReference type="KEGG" id="cgb:cg2609"/>
<dbReference type="KEGG" id="cgl:Cgl2376"/>
<dbReference type="PATRIC" id="fig|196627.13.peg.2311"/>
<dbReference type="eggNOG" id="COG0525">
    <property type="taxonomic scope" value="Bacteria"/>
</dbReference>
<dbReference type="HOGENOM" id="CLU_001493_0_2_11"/>
<dbReference type="OrthoDB" id="9810365at2"/>
<dbReference type="BioCyc" id="CORYNE:G18NG-11973-MONOMER"/>
<dbReference type="Proteomes" id="UP000000582">
    <property type="component" value="Chromosome"/>
</dbReference>
<dbReference type="Proteomes" id="UP000001009">
    <property type="component" value="Chromosome"/>
</dbReference>
<dbReference type="GO" id="GO:0005829">
    <property type="term" value="C:cytosol"/>
    <property type="evidence" value="ECO:0007669"/>
    <property type="project" value="TreeGrafter"/>
</dbReference>
<dbReference type="GO" id="GO:0002161">
    <property type="term" value="F:aminoacyl-tRNA deacylase activity"/>
    <property type="evidence" value="ECO:0007669"/>
    <property type="project" value="InterPro"/>
</dbReference>
<dbReference type="GO" id="GO:0005524">
    <property type="term" value="F:ATP binding"/>
    <property type="evidence" value="ECO:0007669"/>
    <property type="project" value="UniProtKB-UniRule"/>
</dbReference>
<dbReference type="GO" id="GO:0004832">
    <property type="term" value="F:valine-tRNA ligase activity"/>
    <property type="evidence" value="ECO:0007669"/>
    <property type="project" value="UniProtKB-UniRule"/>
</dbReference>
<dbReference type="GO" id="GO:0006438">
    <property type="term" value="P:valyl-tRNA aminoacylation"/>
    <property type="evidence" value="ECO:0007669"/>
    <property type="project" value="UniProtKB-UniRule"/>
</dbReference>
<dbReference type="CDD" id="cd07962">
    <property type="entry name" value="Anticodon_Ia_Val"/>
    <property type="match status" value="1"/>
</dbReference>
<dbReference type="CDD" id="cd00817">
    <property type="entry name" value="ValRS_core"/>
    <property type="match status" value="1"/>
</dbReference>
<dbReference type="FunFam" id="1.10.287.380:FF:000001">
    <property type="entry name" value="Valine--tRNA ligase"/>
    <property type="match status" value="1"/>
</dbReference>
<dbReference type="FunFam" id="3.40.50.620:FF:000032">
    <property type="entry name" value="Valine--tRNA ligase"/>
    <property type="match status" value="1"/>
</dbReference>
<dbReference type="FunFam" id="3.40.50.620:FF:000098">
    <property type="entry name" value="Valine--tRNA ligase"/>
    <property type="match status" value="1"/>
</dbReference>
<dbReference type="Gene3D" id="3.40.50.620">
    <property type="entry name" value="HUPs"/>
    <property type="match status" value="2"/>
</dbReference>
<dbReference type="Gene3D" id="1.10.730.10">
    <property type="entry name" value="Isoleucyl-tRNA Synthetase, Domain 1"/>
    <property type="match status" value="1"/>
</dbReference>
<dbReference type="Gene3D" id="1.10.287.380">
    <property type="entry name" value="Valyl-tRNA synthetase, C-terminal domain"/>
    <property type="match status" value="1"/>
</dbReference>
<dbReference type="HAMAP" id="MF_02004">
    <property type="entry name" value="Val_tRNA_synth_type1"/>
    <property type="match status" value="1"/>
</dbReference>
<dbReference type="InterPro" id="IPR001412">
    <property type="entry name" value="aa-tRNA-synth_I_CS"/>
</dbReference>
<dbReference type="InterPro" id="IPR002300">
    <property type="entry name" value="aa-tRNA-synth_Ia"/>
</dbReference>
<dbReference type="InterPro" id="IPR033705">
    <property type="entry name" value="Anticodon_Ia_Val"/>
</dbReference>
<dbReference type="InterPro" id="IPR013155">
    <property type="entry name" value="M/V/L/I-tRNA-synth_anticd-bd"/>
</dbReference>
<dbReference type="InterPro" id="IPR014729">
    <property type="entry name" value="Rossmann-like_a/b/a_fold"/>
</dbReference>
<dbReference type="InterPro" id="IPR010978">
    <property type="entry name" value="tRNA-bd_arm"/>
</dbReference>
<dbReference type="InterPro" id="IPR009080">
    <property type="entry name" value="tRNAsynth_Ia_anticodon-bd"/>
</dbReference>
<dbReference type="InterPro" id="IPR037118">
    <property type="entry name" value="Val-tRNA_synth_C_sf"/>
</dbReference>
<dbReference type="InterPro" id="IPR019499">
    <property type="entry name" value="Val-tRNA_synth_tRNA-bd"/>
</dbReference>
<dbReference type="InterPro" id="IPR009008">
    <property type="entry name" value="Val/Leu/Ile-tRNA-synth_edit"/>
</dbReference>
<dbReference type="InterPro" id="IPR002303">
    <property type="entry name" value="Valyl-tRNA_ligase"/>
</dbReference>
<dbReference type="NCBIfam" id="NF004349">
    <property type="entry name" value="PRK05729.1"/>
    <property type="match status" value="1"/>
</dbReference>
<dbReference type="NCBIfam" id="TIGR00422">
    <property type="entry name" value="valS"/>
    <property type="match status" value="1"/>
</dbReference>
<dbReference type="PANTHER" id="PTHR11946:SF93">
    <property type="entry name" value="VALINE--TRNA LIGASE, CHLOROPLASTIC_MITOCHONDRIAL 2"/>
    <property type="match status" value="1"/>
</dbReference>
<dbReference type="PANTHER" id="PTHR11946">
    <property type="entry name" value="VALYL-TRNA SYNTHETASES"/>
    <property type="match status" value="1"/>
</dbReference>
<dbReference type="Pfam" id="PF08264">
    <property type="entry name" value="Anticodon_1"/>
    <property type="match status" value="1"/>
</dbReference>
<dbReference type="Pfam" id="PF00133">
    <property type="entry name" value="tRNA-synt_1"/>
    <property type="match status" value="2"/>
</dbReference>
<dbReference type="Pfam" id="PF10458">
    <property type="entry name" value="Val_tRNA-synt_C"/>
    <property type="match status" value="1"/>
</dbReference>
<dbReference type="PRINTS" id="PR00986">
    <property type="entry name" value="TRNASYNTHVAL"/>
</dbReference>
<dbReference type="SUPFAM" id="SSF47323">
    <property type="entry name" value="Anticodon-binding domain of a subclass of class I aminoacyl-tRNA synthetases"/>
    <property type="match status" value="1"/>
</dbReference>
<dbReference type="SUPFAM" id="SSF52374">
    <property type="entry name" value="Nucleotidylyl transferase"/>
    <property type="match status" value="1"/>
</dbReference>
<dbReference type="SUPFAM" id="SSF46589">
    <property type="entry name" value="tRNA-binding arm"/>
    <property type="match status" value="1"/>
</dbReference>
<dbReference type="SUPFAM" id="SSF50677">
    <property type="entry name" value="ValRS/IleRS/LeuRS editing domain"/>
    <property type="match status" value="1"/>
</dbReference>
<dbReference type="PROSITE" id="PS00178">
    <property type="entry name" value="AA_TRNA_LIGASE_I"/>
    <property type="match status" value="1"/>
</dbReference>
<gene>
    <name evidence="1" type="primary">valS</name>
    <name type="ordered locus">Cgl2376</name>
    <name type="ordered locus">cg2609</name>
</gene>
<proteinExistence type="inferred from homology"/>